<organism>
    <name type="scientific">Desulfotalea psychrophila (strain LSv54 / DSM 12343)</name>
    <dbReference type="NCBI Taxonomy" id="177439"/>
    <lineage>
        <taxon>Bacteria</taxon>
        <taxon>Pseudomonadati</taxon>
        <taxon>Thermodesulfobacteriota</taxon>
        <taxon>Desulfobulbia</taxon>
        <taxon>Desulfobulbales</taxon>
        <taxon>Desulfocapsaceae</taxon>
        <taxon>Desulfotalea</taxon>
    </lineage>
</organism>
<protein>
    <recommendedName>
        <fullName evidence="1">Phosphoribosylaminoimidazole-succinocarboxamide synthase</fullName>
        <ecNumber evidence="1">6.3.2.6</ecNumber>
    </recommendedName>
    <alternativeName>
        <fullName evidence="1">SAICAR synthetase</fullName>
    </alternativeName>
</protein>
<keyword id="KW-0067">ATP-binding</keyword>
<keyword id="KW-0436">Ligase</keyword>
<keyword id="KW-0547">Nucleotide-binding</keyword>
<keyword id="KW-0658">Purine biosynthesis</keyword>
<keyword id="KW-1185">Reference proteome</keyword>
<feature type="chain" id="PRO_1000018699" description="Phosphoribosylaminoimidazole-succinocarboxamide synthase">
    <location>
        <begin position="1"/>
        <end position="296"/>
    </location>
</feature>
<dbReference type="EC" id="6.3.2.6" evidence="1"/>
<dbReference type="EMBL" id="CR522870">
    <property type="protein sequence ID" value="CAG37231.1"/>
    <property type="molecule type" value="Genomic_DNA"/>
</dbReference>
<dbReference type="RefSeq" id="WP_011189743.1">
    <property type="nucleotide sequence ID" value="NC_006138.1"/>
</dbReference>
<dbReference type="SMR" id="Q6AK95"/>
<dbReference type="STRING" id="177439.DP2502"/>
<dbReference type="KEGG" id="dps:DP2502"/>
<dbReference type="eggNOG" id="COG0152">
    <property type="taxonomic scope" value="Bacteria"/>
</dbReference>
<dbReference type="HOGENOM" id="CLU_045637_0_0_7"/>
<dbReference type="OrthoDB" id="9801549at2"/>
<dbReference type="UniPathway" id="UPA00074">
    <property type="reaction ID" value="UER00131"/>
</dbReference>
<dbReference type="Proteomes" id="UP000000602">
    <property type="component" value="Chromosome"/>
</dbReference>
<dbReference type="GO" id="GO:0005737">
    <property type="term" value="C:cytoplasm"/>
    <property type="evidence" value="ECO:0007669"/>
    <property type="project" value="TreeGrafter"/>
</dbReference>
<dbReference type="GO" id="GO:0005524">
    <property type="term" value="F:ATP binding"/>
    <property type="evidence" value="ECO:0007669"/>
    <property type="project" value="UniProtKB-KW"/>
</dbReference>
<dbReference type="GO" id="GO:0004639">
    <property type="term" value="F:phosphoribosylaminoimidazolesuccinocarboxamide synthase activity"/>
    <property type="evidence" value="ECO:0007669"/>
    <property type="project" value="UniProtKB-UniRule"/>
</dbReference>
<dbReference type="GO" id="GO:0006189">
    <property type="term" value="P:'de novo' IMP biosynthetic process"/>
    <property type="evidence" value="ECO:0007669"/>
    <property type="project" value="UniProtKB-UniRule"/>
</dbReference>
<dbReference type="CDD" id="cd01414">
    <property type="entry name" value="SAICAR_synt_Sc"/>
    <property type="match status" value="1"/>
</dbReference>
<dbReference type="FunFam" id="3.30.470.20:FF:000015">
    <property type="entry name" value="Phosphoribosylaminoimidazole-succinocarboxamide synthase"/>
    <property type="match status" value="1"/>
</dbReference>
<dbReference type="Gene3D" id="3.30.470.20">
    <property type="entry name" value="ATP-grasp fold, B domain"/>
    <property type="match status" value="1"/>
</dbReference>
<dbReference type="Gene3D" id="3.30.200.20">
    <property type="entry name" value="Phosphorylase Kinase, domain 1"/>
    <property type="match status" value="1"/>
</dbReference>
<dbReference type="HAMAP" id="MF_00137">
    <property type="entry name" value="SAICAR_synth"/>
    <property type="match status" value="1"/>
</dbReference>
<dbReference type="InterPro" id="IPR028923">
    <property type="entry name" value="SAICAR_synt/ADE2_N"/>
</dbReference>
<dbReference type="InterPro" id="IPR001636">
    <property type="entry name" value="SAICAR_synth"/>
</dbReference>
<dbReference type="InterPro" id="IPR018236">
    <property type="entry name" value="SAICAR_synthetase_CS"/>
</dbReference>
<dbReference type="NCBIfam" id="NF010568">
    <property type="entry name" value="PRK13961.1"/>
    <property type="match status" value="1"/>
</dbReference>
<dbReference type="NCBIfam" id="TIGR00081">
    <property type="entry name" value="purC"/>
    <property type="match status" value="1"/>
</dbReference>
<dbReference type="PANTHER" id="PTHR43700">
    <property type="entry name" value="PHOSPHORIBOSYLAMINOIMIDAZOLE-SUCCINOCARBOXAMIDE SYNTHASE"/>
    <property type="match status" value="1"/>
</dbReference>
<dbReference type="PANTHER" id="PTHR43700:SF1">
    <property type="entry name" value="PHOSPHORIBOSYLAMINOIMIDAZOLE-SUCCINOCARBOXAMIDE SYNTHASE"/>
    <property type="match status" value="1"/>
</dbReference>
<dbReference type="Pfam" id="PF01259">
    <property type="entry name" value="SAICAR_synt"/>
    <property type="match status" value="1"/>
</dbReference>
<dbReference type="SUPFAM" id="SSF56104">
    <property type="entry name" value="SAICAR synthase-like"/>
    <property type="match status" value="1"/>
</dbReference>
<dbReference type="PROSITE" id="PS01057">
    <property type="entry name" value="SAICAR_SYNTHETASE_1"/>
    <property type="match status" value="1"/>
</dbReference>
<comment type="catalytic activity">
    <reaction evidence="1">
        <text>5-amino-1-(5-phospho-D-ribosyl)imidazole-4-carboxylate + L-aspartate + ATP = (2S)-2-[5-amino-1-(5-phospho-beta-D-ribosyl)imidazole-4-carboxamido]succinate + ADP + phosphate + 2 H(+)</text>
        <dbReference type="Rhea" id="RHEA:22628"/>
        <dbReference type="ChEBI" id="CHEBI:15378"/>
        <dbReference type="ChEBI" id="CHEBI:29991"/>
        <dbReference type="ChEBI" id="CHEBI:30616"/>
        <dbReference type="ChEBI" id="CHEBI:43474"/>
        <dbReference type="ChEBI" id="CHEBI:58443"/>
        <dbReference type="ChEBI" id="CHEBI:77657"/>
        <dbReference type="ChEBI" id="CHEBI:456216"/>
        <dbReference type="EC" id="6.3.2.6"/>
    </reaction>
</comment>
<comment type="pathway">
    <text evidence="1">Purine metabolism; IMP biosynthesis via de novo pathway; 5-amino-1-(5-phospho-D-ribosyl)imidazole-4-carboxamide from 5-amino-1-(5-phospho-D-ribosyl)imidazole-4-carboxylate: step 1/2.</text>
</comment>
<comment type="similarity">
    <text evidence="1">Belongs to the SAICAR synthetase family.</text>
</comment>
<name>PUR7_DESPS</name>
<sequence length="296" mass="33348">MTEAMLTTDFPQLNLVHSGKVRDMYAIPGHDDKLLMVATDRISAYDVILSAIPGKGAILTQLSLFWFDLLADIVDNHMITADVTEYPEACAPYAEQLRGRSILVKRTKPLPIECIVRGYISGSFWKAYQQDTNVCGFQLPEGMQESDKFPEPIFTPSTKAELGDHDENISFERMQEIVGVEKAEQIARISKALYTRAADYARTKGVIIADTKFELGEVDGKIILIDEVLTPDSSRFWAADKYEPGKSQESFDKQYLRDYLSSLDWDKNPPAPPLPEEIIVKTKARYDEAVERITGK</sequence>
<reference key="1">
    <citation type="journal article" date="2004" name="Environ. Microbiol.">
        <title>The genome of Desulfotalea psychrophila, a sulfate-reducing bacterium from permanently cold Arctic sediments.</title>
        <authorList>
            <person name="Rabus R."/>
            <person name="Ruepp A."/>
            <person name="Frickey T."/>
            <person name="Rattei T."/>
            <person name="Fartmann B."/>
            <person name="Stark M."/>
            <person name="Bauer M."/>
            <person name="Zibat A."/>
            <person name="Lombardot T."/>
            <person name="Becker I."/>
            <person name="Amann J."/>
            <person name="Gellner K."/>
            <person name="Teeling H."/>
            <person name="Leuschner W.D."/>
            <person name="Gloeckner F.-O."/>
            <person name="Lupas A.N."/>
            <person name="Amann R."/>
            <person name="Klenk H.-P."/>
        </authorList>
    </citation>
    <scope>NUCLEOTIDE SEQUENCE [LARGE SCALE GENOMIC DNA]</scope>
    <source>
        <strain>DSM 12343 / LSv54</strain>
    </source>
</reference>
<accession>Q6AK95</accession>
<evidence type="ECO:0000255" key="1">
    <source>
        <dbReference type="HAMAP-Rule" id="MF_00137"/>
    </source>
</evidence>
<proteinExistence type="inferred from homology"/>
<gene>
    <name evidence="1" type="primary">purC</name>
    <name type="ordered locus">DP2502</name>
</gene>